<protein>
    <recommendedName>
        <fullName evidence="5">Protein FAM170B</fullName>
    </recommendedName>
    <alternativeName>
        <fullName evidence="4">Acrosome-related protein</fullName>
    </alternativeName>
</protein>
<evidence type="ECO:0000250" key="1">
    <source>
        <dbReference type="UniProtKB" id="A6NMN3"/>
    </source>
</evidence>
<evidence type="ECO:0000256" key="2">
    <source>
        <dbReference type="SAM" id="MobiDB-lite"/>
    </source>
</evidence>
<evidence type="ECO:0000269" key="3">
    <source>
    </source>
</evidence>
<evidence type="ECO:0000303" key="4">
    <source>
    </source>
</evidence>
<evidence type="ECO:0000305" key="5"/>
<evidence type="ECO:0000312" key="6">
    <source>
        <dbReference type="MGI" id="MGI:2145650"/>
    </source>
</evidence>
<proteinExistence type="evidence at protein level"/>
<sequence>MKHHLIEHRGEQTPGTAVGMASPDAAEESTGVCWPGGAMRRNESSPRPGPAFLPDDDIYLAARAQGVLGWSSSPSSQSSSEYQSYSQYQSWDSSKSEEQQETPPESVCALYTHVQTVRGVAVAWETDDGFEPVTRKPLIREAEFIKRQRRKGSSFEMASNTDLRWELEDCKHYCPQTEDPVDCCMQELRAPPDWLVTTNHGLRCVACCRVFPTLEALLDHAQHGIQDGFSCQIFFEEMLERKRTRDQKQDQQPVEEEQSLSDSSECTRLLTKVLPWQQQPQQQPQEQQKQQQQQQQKQRQQEQQQHQQQQQQPQPLKQQQQQQQQQPLQPQPLKQQPLQPLQPQPQPQPQKQQQRQQQRQQQPPRQQQKQQPLQQQGK</sequence>
<organism>
    <name type="scientific">Mus musculus</name>
    <name type="common">Mouse</name>
    <dbReference type="NCBI Taxonomy" id="10090"/>
    <lineage>
        <taxon>Eukaryota</taxon>
        <taxon>Metazoa</taxon>
        <taxon>Chordata</taxon>
        <taxon>Craniata</taxon>
        <taxon>Vertebrata</taxon>
        <taxon>Euteleostomi</taxon>
        <taxon>Mammalia</taxon>
        <taxon>Eutheria</taxon>
        <taxon>Euarchontoglires</taxon>
        <taxon>Glires</taxon>
        <taxon>Rodentia</taxon>
        <taxon>Myomorpha</taxon>
        <taxon>Muroidea</taxon>
        <taxon>Muridae</taxon>
        <taxon>Murinae</taxon>
        <taxon>Mus</taxon>
        <taxon>Mus</taxon>
    </lineage>
</organism>
<name>F170B_MOUSE</name>
<gene>
    <name evidence="6" type="primary">Fam170b</name>
</gene>
<keyword id="KW-0175">Coiled coil</keyword>
<keyword id="KW-0968">Cytoplasmic vesicle</keyword>
<keyword id="KW-0472">Membrane</keyword>
<keyword id="KW-1185">Reference proteome</keyword>
<reference key="1">
    <citation type="journal article" date="2009" name="PLoS Biol.">
        <title>Lineage-specific biology revealed by a finished genome assembly of the mouse.</title>
        <authorList>
            <person name="Church D.M."/>
            <person name="Goodstadt L."/>
            <person name="Hillier L.W."/>
            <person name="Zody M.C."/>
            <person name="Goldstein S."/>
            <person name="She X."/>
            <person name="Bult C.J."/>
            <person name="Agarwala R."/>
            <person name="Cherry J.L."/>
            <person name="DiCuccio M."/>
            <person name="Hlavina W."/>
            <person name="Kapustin Y."/>
            <person name="Meric P."/>
            <person name="Maglott D."/>
            <person name="Birtle Z."/>
            <person name="Marques A.C."/>
            <person name="Graves T."/>
            <person name="Zhou S."/>
            <person name="Teague B."/>
            <person name="Potamousis K."/>
            <person name="Churas C."/>
            <person name="Place M."/>
            <person name="Herschleb J."/>
            <person name="Runnheim R."/>
            <person name="Forrest D."/>
            <person name="Amos-Landgraf J."/>
            <person name="Schwartz D.C."/>
            <person name="Cheng Z."/>
            <person name="Lindblad-Toh K."/>
            <person name="Eichler E.E."/>
            <person name="Ponting C.P."/>
        </authorList>
    </citation>
    <scope>NUCLEOTIDE SEQUENCE [LARGE SCALE GENOMIC DNA]</scope>
    <source>
        <strain>C57BL/6J</strain>
    </source>
</reference>
<reference key="2">
    <citation type="journal article" date="2010" name="Cell">
        <title>A tissue-specific atlas of mouse protein phosphorylation and expression.</title>
        <authorList>
            <person name="Huttlin E.L."/>
            <person name="Jedrychowski M.P."/>
            <person name="Elias J.E."/>
            <person name="Goswami T."/>
            <person name="Rad R."/>
            <person name="Beausoleil S.A."/>
            <person name="Villen J."/>
            <person name="Haas W."/>
            <person name="Sowa M.E."/>
            <person name="Gygi S.P."/>
        </authorList>
    </citation>
    <scope>IDENTIFICATION BY MASS SPECTROMETRY [LARGE SCALE ANALYSIS]</scope>
    <source>
        <tissue>Testis</tissue>
    </source>
</reference>
<reference key="3">
    <citation type="journal article" date="2015" name="Mol. Reprod. Dev.">
        <title>FAM170B, a novel acrosomal protein involved in fertilization in mice.</title>
        <authorList>
            <person name="Li Y."/>
            <person name="Lin S."/>
            <person name="Luo M."/>
            <person name="Guo H."/>
            <person name="Chen J."/>
            <person name="Ma Q."/>
            <person name="Gu Y."/>
            <person name="Jiang Z."/>
            <person name="Gui Y."/>
        </authorList>
    </citation>
    <scope>TISSUE SPECIFICITY</scope>
    <scope>SUBCELLULAR LOCATION</scope>
    <scope>FUNCTION</scope>
</reference>
<comment type="function">
    <text evidence="3">Plays a role in fertilization through the acrosome reaction.</text>
</comment>
<comment type="subunit">
    <text evidence="1">Interacts with GOPC.</text>
</comment>
<comment type="subcellular location">
    <subcellularLocation>
        <location evidence="3">Cytoplasmic vesicle</location>
        <location evidence="3">Secretory vesicle</location>
        <location evidence="3">Acrosome</location>
    </subcellularLocation>
    <subcellularLocation>
        <location evidence="3">Cytoplasmic vesicle</location>
        <location evidence="3">Secretory vesicle</location>
        <location evidence="3">Acrosome outer membrane</location>
    </subcellularLocation>
</comment>
<comment type="tissue specificity">
    <text evidence="3">Exclusively expressed in adult testis (at protein level). Expression first started at postnatal week 3 in round spermatids, elongated spermatids and mature sperm.</text>
</comment>
<comment type="similarity">
    <text evidence="5">Belongs to the FAM170 family.</text>
</comment>
<dbReference type="EMBL" id="AC133585">
    <property type="status" value="NOT_ANNOTATED_CDS"/>
    <property type="molecule type" value="Genomic_DNA"/>
</dbReference>
<dbReference type="CCDS" id="CCDS49439.1"/>
<dbReference type="RefSeq" id="NP_001157957.1">
    <property type="nucleotide sequence ID" value="NM_001164485.2"/>
</dbReference>
<dbReference type="FunCoup" id="E9PXT9">
    <property type="interactions" value="25"/>
</dbReference>
<dbReference type="STRING" id="10090.ENSMUSP00000100529"/>
<dbReference type="PhosphoSitePlus" id="E9PXT9"/>
<dbReference type="SwissPalm" id="E9PXT9"/>
<dbReference type="PaxDb" id="10090-ENSMUSP00000100529"/>
<dbReference type="ProteomicsDB" id="275509"/>
<dbReference type="Antibodypedia" id="61247">
    <property type="antibodies" value="32 antibodies from 9 providers"/>
</dbReference>
<dbReference type="Ensembl" id="ENSMUST00000104926.3">
    <property type="protein sequence ID" value="ENSMUSP00000100529.3"/>
    <property type="gene ID" value="ENSMUSG00000078127.4"/>
</dbReference>
<dbReference type="GeneID" id="105511"/>
<dbReference type="KEGG" id="mmu:105511"/>
<dbReference type="UCSC" id="uc011ziq.1">
    <property type="organism name" value="mouse"/>
</dbReference>
<dbReference type="AGR" id="MGI:2145650"/>
<dbReference type="CTD" id="170370"/>
<dbReference type="MGI" id="MGI:2145650">
    <property type="gene designation" value="Fam170b"/>
</dbReference>
<dbReference type="VEuPathDB" id="HostDB:ENSMUSG00000078127"/>
<dbReference type="eggNOG" id="ENOG502S6PC">
    <property type="taxonomic scope" value="Eukaryota"/>
</dbReference>
<dbReference type="GeneTree" id="ENSGT00940000162512"/>
<dbReference type="HOGENOM" id="CLU_062038_1_0_1"/>
<dbReference type="InParanoid" id="E9PXT9"/>
<dbReference type="OMA" id="LYTHVQT"/>
<dbReference type="OrthoDB" id="8898641at2759"/>
<dbReference type="PhylomeDB" id="E9PXT9"/>
<dbReference type="TreeFam" id="TF337124"/>
<dbReference type="BioGRID-ORCS" id="105511">
    <property type="hits" value="3 hits in 79 CRISPR screens"/>
</dbReference>
<dbReference type="PRO" id="PR:E9PXT9"/>
<dbReference type="Proteomes" id="UP000000589">
    <property type="component" value="Chromosome 14"/>
</dbReference>
<dbReference type="RNAct" id="E9PXT9">
    <property type="molecule type" value="protein"/>
</dbReference>
<dbReference type="Bgee" id="ENSMUSG00000078127">
    <property type="expression patterns" value="Expressed in spermatid and 28 other cell types or tissues"/>
</dbReference>
<dbReference type="GO" id="GO:0001669">
    <property type="term" value="C:acrosomal vesicle"/>
    <property type="evidence" value="ECO:0000314"/>
    <property type="project" value="UniProtKB"/>
</dbReference>
<dbReference type="GO" id="GO:0002081">
    <property type="term" value="C:outer acrosomal membrane"/>
    <property type="evidence" value="ECO:0000314"/>
    <property type="project" value="UniProtKB"/>
</dbReference>
<dbReference type="GO" id="GO:2000344">
    <property type="term" value="P:positive regulation of acrosome reaction"/>
    <property type="evidence" value="ECO:0000315"/>
    <property type="project" value="UniProtKB"/>
</dbReference>
<dbReference type="GO" id="GO:0080154">
    <property type="term" value="P:regulation of fertilization"/>
    <property type="evidence" value="ECO:0000315"/>
    <property type="project" value="UniProtKB"/>
</dbReference>
<dbReference type="InterPro" id="IPR040879">
    <property type="entry name" value="Spt46-like"/>
</dbReference>
<dbReference type="PANTHER" id="PTHR33517:SF2">
    <property type="entry name" value="PROTEIN FAM170B"/>
    <property type="match status" value="1"/>
</dbReference>
<dbReference type="PANTHER" id="PTHR33517">
    <property type="entry name" value="PROTEIN FAM170B-RELATED"/>
    <property type="match status" value="1"/>
</dbReference>
<dbReference type="Pfam" id="PF17734">
    <property type="entry name" value="Spt46"/>
    <property type="match status" value="1"/>
</dbReference>
<accession>E9PXT9</accession>
<feature type="chain" id="PRO_0000435474" description="Protein FAM170B">
    <location>
        <begin position="1"/>
        <end position="378"/>
    </location>
</feature>
<feature type="region of interest" description="Disordered" evidence="2">
    <location>
        <begin position="1"/>
        <end position="56"/>
    </location>
</feature>
<feature type="region of interest" description="Disordered" evidence="2">
    <location>
        <begin position="244"/>
        <end position="265"/>
    </location>
</feature>
<feature type="region of interest" description="Disordered" evidence="2">
    <location>
        <begin position="277"/>
        <end position="378"/>
    </location>
</feature>
<feature type="compositionally biased region" description="Low complexity" evidence="2">
    <location>
        <begin position="277"/>
        <end position="339"/>
    </location>
</feature>
<feature type="compositionally biased region" description="Low complexity" evidence="2">
    <location>
        <begin position="349"/>
        <end position="378"/>
    </location>
</feature>